<dbReference type="EMBL" id="X00059">
    <property type="status" value="NOT_ANNOTATED_CDS"/>
    <property type="molecule type" value="Genomic_DNA"/>
</dbReference>
<dbReference type="EMBL" id="AE006468">
    <property type="protein sequence ID" value="AAL19078.1"/>
    <property type="molecule type" value="Genomic_DNA"/>
</dbReference>
<dbReference type="PIR" id="A03598">
    <property type="entry name" value="LFEBLT"/>
</dbReference>
<dbReference type="RefSeq" id="NP_459119.1">
    <property type="nucleotide sequence ID" value="NC_003197.2"/>
</dbReference>
<dbReference type="RefSeq" id="WP_001575587.1">
    <property type="nucleotide sequence ID" value="NC_003197.2"/>
</dbReference>
<dbReference type="STRING" id="99287.STM0114"/>
<dbReference type="PaxDb" id="99287-STM0114"/>
<dbReference type="GeneID" id="1251632"/>
<dbReference type="KEGG" id="stm:STM0114"/>
<dbReference type="HOGENOM" id="CLU_221572_0_0_6"/>
<dbReference type="PhylomeDB" id="P03062"/>
<dbReference type="BioCyc" id="SENT99287:STM0114-MONOMER"/>
<dbReference type="Proteomes" id="UP000001014">
    <property type="component" value="Chromosome"/>
</dbReference>
<dbReference type="GO" id="GO:0009098">
    <property type="term" value="P:L-leucine biosynthetic process"/>
    <property type="evidence" value="ECO:0007669"/>
    <property type="project" value="UniProtKB-KW"/>
</dbReference>
<dbReference type="InterPro" id="IPR012570">
    <property type="entry name" value="Leu_leader"/>
</dbReference>
<dbReference type="NCBIfam" id="NF011328">
    <property type="entry name" value="PRK14744.1"/>
    <property type="match status" value="1"/>
</dbReference>
<dbReference type="Pfam" id="PF08054">
    <property type="entry name" value="Leu_leader"/>
    <property type="match status" value="1"/>
</dbReference>
<accession>P03062</accession>
<feature type="peptide" id="PRO_0000043999" description="leu operon leader peptide">
    <location>
        <begin position="1"/>
        <end position="28"/>
    </location>
</feature>
<gene>
    <name type="primary">leuL</name>
    <name type="synonym">leuLP</name>
    <name type="ordered locus">STM0114</name>
</gene>
<sequence>MSHIVRFTGLLLLNAFIVRGRPVGGIQH</sequence>
<reference key="1">
    <citation type="journal article" date="1979" name="Proc. Natl. Acad. Sci. U.S.A.">
        <title>Leu operon of Salmonella typhimurium is controlled by an attenuation mechanism.</title>
        <authorList>
            <person name="Gemmill R.M."/>
            <person name="Wessler S.R."/>
            <person name="Keller E.B."/>
            <person name="Calvo J.M."/>
        </authorList>
    </citation>
    <scope>NUCLEOTIDE SEQUENCE [GENOMIC DNA]</scope>
    <source>
        <strain>LT2</strain>
    </source>
</reference>
<reference key="2">
    <citation type="journal article" date="2001" name="Nature">
        <title>Complete genome sequence of Salmonella enterica serovar Typhimurium LT2.</title>
        <authorList>
            <person name="McClelland M."/>
            <person name="Sanderson K.E."/>
            <person name="Spieth J."/>
            <person name="Clifton S.W."/>
            <person name="Latreille P."/>
            <person name="Courtney L."/>
            <person name="Porwollik S."/>
            <person name="Ali J."/>
            <person name="Dante M."/>
            <person name="Du F."/>
            <person name="Hou S."/>
            <person name="Layman D."/>
            <person name="Leonard S."/>
            <person name="Nguyen C."/>
            <person name="Scott K."/>
            <person name="Holmes A."/>
            <person name="Grewal N."/>
            <person name="Mulvaney E."/>
            <person name="Ryan E."/>
            <person name="Sun H."/>
            <person name="Florea L."/>
            <person name="Miller W."/>
            <person name="Stoneking T."/>
            <person name="Nhan M."/>
            <person name="Waterston R."/>
            <person name="Wilson R.K."/>
        </authorList>
    </citation>
    <scope>NUCLEOTIDE SEQUENCE [LARGE SCALE GENOMIC DNA]</scope>
    <source>
        <strain>LT2 / SGSC1412 / ATCC 700720</strain>
    </source>
</reference>
<name>LPL_SALTY</name>
<proteinExistence type="predicted"/>
<organism>
    <name type="scientific">Salmonella typhimurium (strain LT2 / SGSC1412 / ATCC 700720)</name>
    <dbReference type="NCBI Taxonomy" id="99287"/>
    <lineage>
        <taxon>Bacteria</taxon>
        <taxon>Pseudomonadati</taxon>
        <taxon>Pseudomonadota</taxon>
        <taxon>Gammaproteobacteria</taxon>
        <taxon>Enterobacterales</taxon>
        <taxon>Enterobacteriaceae</taxon>
        <taxon>Salmonella</taxon>
    </lineage>
</organism>
<keyword id="KW-0028">Amino-acid biosynthesis</keyword>
<keyword id="KW-0100">Branched-chain amino acid biosynthesis</keyword>
<keyword id="KW-0428">Leader peptide</keyword>
<keyword id="KW-0432">Leucine biosynthesis</keyword>
<keyword id="KW-1185">Reference proteome</keyword>
<protein>
    <recommendedName>
        <fullName>leu operon leader peptide</fullName>
    </recommendedName>
    <alternativeName>
        <fullName>leu operon attenuator peptide</fullName>
    </alternativeName>
</protein>
<comment type="function">
    <text>Involved in control of the biosynthesis of leucine.</text>
</comment>